<organism>
    <name type="scientific">Mus musculus</name>
    <name type="common">Mouse</name>
    <dbReference type="NCBI Taxonomy" id="10090"/>
    <lineage>
        <taxon>Eukaryota</taxon>
        <taxon>Metazoa</taxon>
        <taxon>Chordata</taxon>
        <taxon>Craniata</taxon>
        <taxon>Vertebrata</taxon>
        <taxon>Euteleostomi</taxon>
        <taxon>Mammalia</taxon>
        <taxon>Eutheria</taxon>
        <taxon>Euarchontoglires</taxon>
        <taxon>Glires</taxon>
        <taxon>Rodentia</taxon>
        <taxon>Myomorpha</taxon>
        <taxon>Muroidea</taxon>
        <taxon>Muridae</taxon>
        <taxon>Murinae</taxon>
        <taxon>Mus</taxon>
        <taxon>Mus</taxon>
    </lineage>
</organism>
<proteinExistence type="evidence at protein level"/>
<feature type="chain" id="PRO_0000121094" description="Ras-related protein Rab-4A">
    <location>
        <begin position="1"/>
        <end position="218"/>
    </location>
</feature>
<feature type="short sequence motif" description="Switch 1" evidence="5">
    <location>
        <begin position="44"/>
        <end position="49"/>
    </location>
</feature>
<feature type="short sequence motif" description="Switch 2" evidence="5">
    <location>
        <begin position="70"/>
        <end position="79"/>
    </location>
</feature>
<feature type="binding site" evidence="3">
    <location>
        <position position="23"/>
    </location>
    <ligand>
        <name>GTP</name>
        <dbReference type="ChEBI" id="CHEBI:37565"/>
    </ligand>
</feature>
<feature type="binding site" evidence="3">
    <location>
        <position position="24"/>
    </location>
    <ligand>
        <name>GTP</name>
        <dbReference type="ChEBI" id="CHEBI:37565"/>
    </ligand>
</feature>
<feature type="binding site" evidence="3">
    <location>
        <position position="25"/>
    </location>
    <ligand>
        <name>GTP</name>
        <dbReference type="ChEBI" id="CHEBI:37565"/>
    </ligand>
</feature>
<feature type="binding site" evidence="3">
    <location>
        <position position="26"/>
    </location>
    <ligand>
        <name>GTP</name>
        <dbReference type="ChEBI" id="CHEBI:37565"/>
    </ligand>
</feature>
<feature type="binding site" evidence="3">
    <location>
        <position position="27"/>
    </location>
    <ligand>
        <name>GTP</name>
        <dbReference type="ChEBI" id="CHEBI:37565"/>
    </ligand>
</feature>
<feature type="binding site" evidence="3">
    <location>
        <position position="27"/>
    </location>
    <ligand>
        <name>Mg(2+)</name>
        <dbReference type="ChEBI" id="CHEBI:18420"/>
    </ligand>
</feature>
<feature type="binding site" evidence="3">
    <location>
        <position position="28"/>
    </location>
    <ligand>
        <name>GTP</name>
        <dbReference type="ChEBI" id="CHEBI:37565"/>
    </ligand>
</feature>
<feature type="binding site" evidence="3">
    <location>
        <position position="42"/>
    </location>
    <ligand>
        <name>GTP</name>
        <dbReference type="ChEBI" id="CHEBI:37565"/>
    </ligand>
</feature>
<feature type="binding site" evidence="3">
    <location>
        <position position="44"/>
    </location>
    <ligand>
        <name>GTP</name>
        <dbReference type="ChEBI" id="CHEBI:37565"/>
    </ligand>
</feature>
<feature type="binding site" evidence="3">
    <location>
        <position position="45"/>
    </location>
    <ligand>
        <name>GTP</name>
        <dbReference type="ChEBI" id="CHEBI:37565"/>
    </ligand>
</feature>
<feature type="binding site" evidence="3">
    <location>
        <position position="45"/>
    </location>
    <ligand>
        <name>Mg(2+)</name>
        <dbReference type="ChEBI" id="CHEBI:18420"/>
    </ligand>
</feature>
<feature type="binding site" evidence="4">
    <location>
        <position position="68"/>
    </location>
    <ligand>
        <name>Mg(2+)</name>
        <dbReference type="ChEBI" id="CHEBI:18420"/>
    </ligand>
</feature>
<feature type="binding site" evidence="3">
    <location>
        <position position="71"/>
    </location>
    <ligand>
        <name>GTP</name>
        <dbReference type="ChEBI" id="CHEBI:37565"/>
    </ligand>
</feature>
<feature type="binding site" evidence="3">
    <location>
        <position position="126"/>
    </location>
    <ligand>
        <name>GTP</name>
        <dbReference type="ChEBI" id="CHEBI:37565"/>
    </ligand>
</feature>
<feature type="binding site" evidence="3">
    <location>
        <position position="127"/>
    </location>
    <ligand>
        <name>GTP</name>
        <dbReference type="ChEBI" id="CHEBI:37565"/>
    </ligand>
</feature>
<feature type="binding site" evidence="3">
    <location>
        <position position="129"/>
    </location>
    <ligand>
        <name>GTP</name>
        <dbReference type="ChEBI" id="CHEBI:37565"/>
    </ligand>
</feature>
<feature type="binding site" evidence="3">
    <location>
        <position position="157"/>
    </location>
    <ligand>
        <name>GTP</name>
        <dbReference type="ChEBI" id="CHEBI:37565"/>
    </ligand>
</feature>
<feature type="binding site" evidence="3">
    <location>
        <position position="158"/>
    </location>
    <ligand>
        <name>GTP</name>
        <dbReference type="ChEBI" id="CHEBI:37565"/>
    </ligand>
</feature>
<feature type="modified residue" description="5-glutamyl serotonin" evidence="12">
    <location>
        <position position="72"/>
    </location>
</feature>
<feature type="modified residue" description="Phosphoserine" evidence="3">
    <location>
        <position position="190"/>
    </location>
</feature>
<feature type="modified residue" description="Phosphoserine; by CDK1" evidence="3">
    <location>
        <position position="204"/>
    </location>
</feature>
<feature type="modified residue" description="Cysteine methyl ester" evidence="1">
    <location>
        <position position="218"/>
    </location>
</feature>
<feature type="lipid moiety-binding region" description="S-geranylgeranyl cysteine" evidence="1">
    <location>
        <position position="216"/>
    </location>
</feature>
<feature type="lipid moiety-binding region" description="S-geranylgeranyl cysteine" evidence="1">
    <location>
        <position position="218"/>
    </location>
</feature>
<feature type="sequence conflict" description="In Ref. 1; BAA24034." evidence="11" ref="1">
    <original>V</original>
    <variation>M</variation>
    <location>
        <position position="48"/>
    </location>
</feature>
<gene>
    <name evidence="13" type="primary">Rab4a</name>
    <name type="synonym">Rab4</name>
</gene>
<name>RAB4A_MOUSE</name>
<protein>
    <recommendedName>
        <fullName>Ras-related protein Rab-4A</fullName>
        <ecNumber evidence="3">3.6.5.2</ecNumber>
    </recommendedName>
</protein>
<sequence>MAQTAMSETYDFLFKFLVIGNAGTGKSCLLHQFIEKKFKDDSNHTIGVEFGSKIINVGGKYVKLQIWDTAGQERFRSVTRSYYRGAAGALLVYDITSRETYNALTNWLTDARMLASQNIVLILCGNKKDLDADREVTFLEASRFAQENELMFLETSALTGENVEEAFMQCARKILNKIESGELDPERMGSGIQYGDAALRQLRSPRRTQAPSAQECGC</sequence>
<keyword id="KW-0963">Cytoplasm</keyword>
<keyword id="KW-0967">Endosome</keyword>
<keyword id="KW-0342">GTP-binding</keyword>
<keyword id="KW-0378">Hydrolase</keyword>
<keyword id="KW-0449">Lipoprotein</keyword>
<keyword id="KW-0460">Magnesium</keyword>
<keyword id="KW-0472">Membrane</keyword>
<keyword id="KW-0479">Metal-binding</keyword>
<keyword id="KW-0488">Methylation</keyword>
<keyword id="KW-0547">Nucleotide-binding</keyword>
<keyword id="KW-0597">Phosphoprotein</keyword>
<keyword id="KW-0636">Prenylation</keyword>
<keyword id="KW-0653">Protein transport</keyword>
<keyword id="KW-1185">Reference proteome</keyword>
<keyword id="KW-0813">Transport</keyword>
<accession>P56371</accession>
<accession>Q3TSQ6</accession>
<evidence type="ECO:0000250" key="1"/>
<evidence type="ECO:0000250" key="2">
    <source>
        <dbReference type="UniProtKB" id="P05714"/>
    </source>
</evidence>
<evidence type="ECO:0000250" key="3">
    <source>
        <dbReference type="UniProtKB" id="P20338"/>
    </source>
</evidence>
<evidence type="ECO:0000250" key="4">
    <source>
        <dbReference type="UniProtKB" id="P61018"/>
    </source>
</evidence>
<evidence type="ECO:0000250" key="5">
    <source>
        <dbReference type="UniProtKB" id="P61106"/>
    </source>
</evidence>
<evidence type="ECO:0000269" key="6">
    <source>
    </source>
</evidence>
<evidence type="ECO:0000269" key="7">
    <source>
    </source>
</evidence>
<evidence type="ECO:0000269" key="8">
    <source>
    </source>
</evidence>
<evidence type="ECO:0000269" key="9">
    <source>
    </source>
</evidence>
<evidence type="ECO:0000269" key="10">
    <source>
    </source>
</evidence>
<evidence type="ECO:0000305" key="11"/>
<evidence type="ECO:0000305" key="12">
    <source>
    </source>
</evidence>
<evidence type="ECO:0000312" key="13">
    <source>
        <dbReference type="MGI" id="MGI:105069"/>
    </source>
</evidence>
<comment type="function">
    <text evidence="3 7">The small GTPases Rab are key regulators of intracellular membrane trafficking, from the formation of transport vesicles to their fusion with membranes. Rabs cycle between an inactive GDP-bound form and an active GTP-bound form that is able to recruit to membranes different sets of downstream effectors directly responsible for vesicle formation, movement, tethering and fusion (PubMed:14697203). RAB4A is involved in protein transport. Also plays a role in vesicular traffic. Mediates VEGFR2 endosomal trafficking to enhance VEGFR2 signaling (By similarity). Acts as a regulator of platelet alpha-granule release during activation and aggregation of platelets (PubMed:14697203).</text>
</comment>
<comment type="catalytic activity">
    <reaction evidence="3">
        <text>GTP + H2O = GDP + phosphate + H(+)</text>
        <dbReference type="Rhea" id="RHEA:19669"/>
        <dbReference type="ChEBI" id="CHEBI:15377"/>
        <dbReference type="ChEBI" id="CHEBI:15378"/>
        <dbReference type="ChEBI" id="CHEBI:37565"/>
        <dbReference type="ChEBI" id="CHEBI:43474"/>
        <dbReference type="ChEBI" id="CHEBI:58189"/>
        <dbReference type="EC" id="3.6.5.2"/>
    </reaction>
    <physiologicalReaction direction="left-to-right" evidence="3">
        <dbReference type="Rhea" id="RHEA:19670"/>
    </physiologicalReaction>
</comment>
<comment type="cofactor">
    <cofactor evidence="3">
        <name>Mg(2+)</name>
        <dbReference type="ChEBI" id="CHEBI:18420"/>
    </cofactor>
</comment>
<comment type="activity regulation">
    <text evidence="11">Regulated by guanine nucleotide exchange factors (GEFs) which promote the exchange of bound GDP for free GTP. Regulated by GTPase activating proteins (GAPs) which increase the GTP hydrolysis activity. Inhibited by GDP dissociation inhibitors (GDIs).</text>
</comment>
<comment type="subunit">
    <text evidence="3 6 8 9">Interacts with SGSM1, SGSM2 and SGSM3 (PubMed:17509819). Interacts with RAB11FIP1, RABEP1, ZFYVE20 and RUFY1 (PubMed:11172003). Interacts (membrane-bound form) with NDRG1; the interaction involves NDRG1 in vesicular recycling of E-cadherin. Interacts (in GTP-bound form) with GRIPAP1 (via N-terminus). Interacts with RABEP1 and RBSN (By similarity). Does not interact with HPS4 (By similarity). Does not interact with HPS4 (PubMed:20048159). Interacts with RABEP2; this interaction may mediate VEGFR2 cell surface expression (By similarity).</text>
</comment>
<comment type="subcellular location">
    <subcellularLocation>
        <location evidence="3">Membrane</location>
        <topology evidence="3">Peripheral membrane protein</topology>
    </subcellularLocation>
    <subcellularLocation>
        <location evidence="3">Cytoplasm</location>
    </subcellularLocation>
    <subcellularLocation>
        <location evidence="2">Early endosome membrane</location>
        <topology evidence="2">Peripheral membrane protein</topology>
    </subcellularLocation>
    <subcellularLocation>
        <location evidence="2">Recycling endosome membrane</location>
        <topology evidence="2">Peripheral membrane protein</topology>
    </subcellularLocation>
    <text evidence="3">Generally associated with membranes. Cytoplasmic when phosphorylated by CDK1.</text>
</comment>
<comment type="tissue specificity">
    <text evidence="10">Expressed in the central nervous system, including cortex, cerebellum, midbrain and spinal cord, and in the kidney, lung, liver and spleen.</text>
</comment>
<comment type="domain">
    <text evidence="5">Switch 1, switch 2 and the interswitch regions are characteristic of Rab GTPases and mediate the interactions with Rab downstream effectors. The switch regions undergo conformational changes upon nucleotide binding which drives interaction with specific sets of effector proteins, with most effectors only binding to GTP-bound Rab.</text>
</comment>
<comment type="PTM">
    <text evidence="7">Serotonylation of Gln-72 by TGM2 during activation and aggregation of platelets leads to constitutive activation of GTPase activity.</text>
</comment>
<comment type="PTM">
    <text evidence="3">Phosphorylated by CDK1 kinase during mitosis.</text>
</comment>
<comment type="similarity">
    <text evidence="11">Belongs to the small GTPase superfamily. Rab family.</text>
</comment>
<comment type="caution">
    <text evidence="11">It is uncertain whether Met-1 or Met-6 is the initiator.</text>
</comment>
<comment type="sequence caution" evidence="11">
    <conflict type="erroneous initiation">
        <sequence resource="EMBL-CDS" id="BAA24034"/>
    </conflict>
    <text>Truncated N-terminus.</text>
</comment>
<dbReference type="EC" id="3.6.5.2" evidence="3"/>
<dbReference type="EMBL" id="D86563">
    <property type="protein sequence ID" value="BAA24034.1"/>
    <property type="status" value="ALT_INIT"/>
    <property type="molecule type" value="mRNA"/>
</dbReference>
<dbReference type="EMBL" id="AB232591">
    <property type="protein sequence ID" value="BAF02853.1"/>
    <property type="molecule type" value="mRNA"/>
</dbReference>
<dbReference type="EMBL" id="AK136566">
    <property type="protein sequence ID" value="BAE23048.1"/>
    <property type="molecule type" value="mRNA"/>
</dbReference>
<dbReference type="EMBL" id="AK161877">
    <property type="protein sequence ID" value="BAE36619.1"/>
    <property type="molecule type" value="mRNA"/>
</dbReference>
<dbReference type="EMBL" id="AC147266">
    <property type="status" value="NOT_ANNOTATED_CDS"/>
    <property type="molecule type" value="Genomic_DNA"/>
</dbReference>
<dbReference type="EMBL" id="CH466525">
    <property type="protein sequence ID" value="EDL11755.1"/>
    <property type="molecule type" value="Genomic_DNA"/>
</dbReference>
<dbReference type="CCDS" id="CCDS52703.1"/>
<dbReference type="RefSeq" id="NP_033029.2">
    <property type="nucleotide sequence ID" value="NM_009003.5"/>
</dbReference>
<dbReference type="SMR" id="P56371"/>
<dbReference type="BioGRID" id="202546">
    <property type="interactions" value="1"/>
</dbReference>
<dbReference type="FunCoup" id="P56371">
    <property type="interactions" value="1928"/>
</dbReference>
<dbReference type="IntAct" id="P56371">
    <property type="interactions" value="19"/>
</dbReference>
<dbReference type="MINT" id="P56371"/>
<dbReference type="STRING" id="10090.ENSMUSP00000113886"/>
<dbReference type="PhosphoSitePlus" id="P56371"/>
<dbReference type="SwissPalm" id="P56371"/>
<dbReference type="jPOST" id="P56371"/>
<dbReference type="PaxDb" id="10090-ENSMUSP00000113886"/>
<dbReference type="ProteomicsDB" id="253149"/>
<dbReference type="Pumba" id="P56371"/>
<dbReference type="Antibodypedia" id="34673">
    <property type="antibodies" value="345 antibodies from 35 providers"/>
</dbReference>
<dbReference type="DNASU" id="19341"/>
<dbReference type="Ensembl" id="ENSMUST00000117702.2">
    <property type="protein sequence ID" value="ENSMUSP00000113401.2"/>
    <property type="gene ID" value="ENSMUSG00000019478.18"/>
</dbReference>
<dbReference type="Ensembl" id="ENSMUST00000118535.9">
    <property type="protein sequence ID" value="ENSMUSP00000113886.2"/>
    <property type="gene ID" value="ENSMUSG00000019478.18"/>
</dbReference>
<dbReference type="GeneID" id="19341"/>
<dbReference type="KEGG" id="mmu:19341"/>
<dbReference type="UCSC" id="uc009nwo.2">
    <property type="organism name" value="mouse"/>
</dbReference>
<dbReference type="AGR" id="MGI:105069"/>
<dbReference type="CTD" id="5867"/>
<dbReference type="MGI" id="MGI:105069">
    <property type="gene designation" value="Rab4a"/>
</dbReference>
<dbReference type="VEuPathDB" id="HostDB:ENSMUSG00000019478"/>
<dbReference type="eggNOG" id="KOG0086">
    <property type="taxonomic scope" value="Eukaryota"/>
</dbReference>
<dbReference type="GeneTree" id="ENSGT00940000157464"/>
<dbReference type="HOGENOM" id="CLU_041217_23_1_1"/>
<dbReference type="InParanoid" id="P56371"/>
<dbReference type="OMA" id="HEEYALF"/>
<dbReference type="OrthoDB" id="9989112at2759"/>
<dbReference type="PhylomeDB" id="P56371"/>
<dbReference type="TreeFam" id="TF300032"/>
<dbReference type="Reactome" id="R-MMU-1660499">
    <property type="pathway name" value="Synthesis of PIPs at the plasma membrane"/>
</dbReference>
<dbReference type="Reactome" id="R-MMU-8854214">
    <property type="pathway name" value="TBC/RABGAPs"/>
</dbReference>
<dbReference type="Reactome" id="R-MMU-8873719">
    <property type="pathway name" value="RAB geranylgeranylation"/>
</dbReference>
<dbReference type="Reactome" id="R-MMU-8875656">
    <property type="pathway name" value="MET receptor recycling"/>
</dbReference>
<dbReference type="BioGRID-ORCS" id="19341">
    <property type="hits" value="2 hits in 79 CRISPR screens"/>
</dbReference>
<dbReference type="PRO" id="PR:P56371"/>
<dbReference type="Proteomes" id="UP000000589">
    <property type="component" value="Chromosome 8"/>
</dbReference>
<dbReference type="RNAct" id="P56371">
    <property type="molecule type" value="protein"/>
</dbReference>
<dbReference type="Bgee" id="ENSMUSG00000019478">
    <property type="expression patterns" value="Expressed in parotid gland and 259 other cell types or tissues"/>
</dbReference>
<dbReference type="ExpressionAtlas" id="P56371">
    <property type="expression patterns" value="baseline and differential"/>
</dbReference>
<dbReference type="GO" id="GO:0005737">
    <property type="term" value="C:cytoplasm"/>
    <property type="evidence" value="ECO:0000314"/>
    <property type="project" value="MGI"/>
</dbReference>
<dbReference type="GO" id="GO:0030659">
    <property type="term" value="C:cytoplasmic vesicle membrane"/>
    <property type="evidence" value="ECO:0000304"/>
    <property type="project" value="Reactome"/>
</dbReference>
<dbReference type="GO" id="GO:0031901">
    <property type="term" value="C:early endosome membrane"/>
    <property type="evidence" value="ECO:0007669"/>
    <property type="project" value="UniProtKB-SubCell"/>
</dbReference>
<dbReference type="GO" id="GO:0005768">
    <property type="term" value="C:endosome"/>
    <property type="evidence" value="ECO:0000314"/>
    <property type="project" value="MGI"/>
</dbReference>
<dbReference type="GO" id="GO:0070062">
    <property type="term" value="C:extracellular exosome"/>
    <property type="evidence" value="ECO:0007669"/>
    <property type="project" value="Ensembl"/>
</dbReference>
<dbReference type="GO" id="GO:0098978">
    <property type="term" value="C:glutamatergic synapse"/>
    <property type="evidence" value="ECO:0000314"/>
    <property type="project" value="SynGO"/>
</dbReference>
<dbReference type="GO" id="GO:0048471">
    <property type="term" value="C:perinuclear region of cytoplasm"/>
    <property type="evidence" value="ECO:0007669"/>
    <property type="project" value="Ensembl"/>
</dbReference>
<dbReference type="GO" id="GO:0055037">
    <property type="term" value="C:recycling endosome"/>
    <property type="evidence" value="ECO:0000266"/>
    <property type="project" value="MGI"/>
</dbReference>
<dbReference type="GO" id="GO:0055038">
    <property type="term" value="C:recycling endosome membrane"/>
    <property type="evidence" value="ECO:0007669"/>
    <property type="project" value="UniProtKB-SubCell"/>
</dbReference>
<dbReference type="GO" id="GO:0003925">
    <property type="term" value="F:G protein activity"/>
    <property type="evidence" value="ECO:0007669"/>
    <property type="project" value="UniProtKB-EC"/>
</dbReference>
<dbReference type="GO" id="GO:0019003">
    <property type="term" value="F:GDP binding"/>
    <property type="evidence" value="ECO:0000250"/>
    <property type="project" value="UniProtKB"/>
</dbReference>
<dbReference type="GO" id="GO:0005525">
    <property type="term" value="F:GTP binding"/>
    <property type="evidence" value="ECO:0000250"/>
    <property type="project" value="UniProtKB"/>
</dbReference>
<dbReference type="GO" id="GO:0003924">
    <property type="term" value="F:GTPase activity"/>
    <property type="evidence" value="ECO:0000250"/>
    <property type="project" value="UniProtKB"/>
</dbReference>
<dbReference type="GO" id="GO:0019882">
    <property type="term" value="P:antigen processing and presentation"/>
    <property type="evidence" value="ECO:0007669"/>
    <property type="project" value="Ensembl"/>
</dbReference>
<dbReference type="GO" id="GO:0098968">
    <property type="term" value="P:neurotransmitter receptor transport postsynaptic membrane to endosome"/>
    <property type="evidence" value="ECO:0000314"/>
    <property type="project" value="SynGO"/>
</dbReference>
<dbReference type="GO" id="GO:0015031">
    <property type="term" value="P:protein transport"/>
    <property type="evidence" value="ECO:0000314"/>
    <property type="project" value="MGI"/>
</dbReference>
<dbReference type="GO" id="GO:0032482">
    <property type="term" value="P:Rab protein signal transduction"/>
    <property type="evidence" value="ECO:0007669"/>
    <property type="project" value="InterPro"/>
</dbReference>
<dbReference type="GO" id="GO:0030100">
    <property type="term" value="P:regulation of endocytosis"/>
    <property type="evidence" value="ECO:0000314"/>
    <property type="project" value="MGI"/>
</dbReference>
<dbReference type="GO" id="GO:0007264">
    <property type="term" value="P:small GTPase-mediated signal transduction"/>
    <property type="evidence" value="ECO:0000314"/>
    <property type="project" value="MGI"/>
</dbReference>
<dbReference type="GO" id="GO:0099003">
    <property type="term" value="P:vesicle-mediated transport in synapse"/>
    <property type="evidence" value="ECO:0000314"/>
    <property type="project" value="SynGO"/>
</dbReference>
<dbReference type="CDD" id="cd04113">
    <property type="entry name" value="Rab4"/>
    <property type="match status" value="1"/>
</dbReference>
<dbReference type="FunFam" id="3.40.50.300:FF:000280">
    <property type="entry name" value="Putative ras-related protein Rab-4B"/>
    <property type="match status" value="1"/>
</dbReference>
<dbReference type="Gene3D" id="3.40.50.300">
    <property type="entry name" value="P-loop containing nucleotide triphosphate hydrolases"/>
    <property type="match status" value="1"/>
</dbReference>
<dbReference type="InterPro" id="IPR027417">
    <property type="entry name" value="P-loop_NTPase"/>
</dbReference>
<dbReference type="InterPro" id="IPR041819">
    <property type="entry name" value="Rab4"/>
</dbReference>
<dbReference type="InterPro" id="IPR050209">
    <property type="entry name" value="Rab_GTPases_membrane_traffic"/>
</dbReference>
<dbReference type="InterPro" id="IPR005225">
    <property type="entry name" value="Small_GTP-bd"/>
</dbReference>
<dbReference type="InterPro" id="IPR001806">
    <property type="entry name" value="Small_GTPase"/>
</dbReference>
<dbReference type="NCBIfam" id="TIGR00231">
    <property type="entry name" value="small_GTP"/>
    <property type="match status" value="1"/>
</dbReference>
<dbReference type="PANTHER" id="PTHR47979">
    <property type="entry name" value="DRAB11-RELATED"/>
    <property type="match status" value="1"/>
</dbReference>
<dbReference type="Pfam" id="PF00071">
    <property type="entry name" value="Ras"/>
    <property type="match status" value="1"/>
</dbReference>
<dbReference type="PRINTS" id="PR00449">
    <property type="entry name" value="RASTRNSFRMNG"/>
</dbReference>
<dbReference type="SMART" id="SM00177">
    <property type="entry name" value="ARF"/>
    <property type="match status" value="1"/>
</dbReference>
<dbReference type="SMART" id="SM00175">
    <property type="entry name" value="RAB"/>
    <property type="match status" value="1"/>
</dbReference>
<dbReference type="SMART" id="SM00176">
    <property type="entry name" value="RAN"/>
    <property type="match status" value="1"/>
</dbReference>
<dbReference type="SMART" id="SM00173">
    <property type="entry name" value="RAS"/>
    <property type="match status" value="1"/>
</dbReference>
<dbReference type="SMART" id="SM00174">
    <property type="entry name" value="RHO"/>
    <property type="match status" value="1"/>
</dbReference>
<dbReference type="SUPFAM" id="SSF52540">
    <property type="entry name" value="P-loop containing nucleoside triphosphate hydrolases"/>
    <property type="match status" value="1"/>
</dbReference>
<dbReference type="PROSITE" id="PS51419">
    <property type="entry name" value="RAB"/>
    <property type="match status" value="1"/>
</dbReference>
<reference key="1">
    <citation type="journal article" date="1996" name="Biochem. Mol. Biol. Int.">
        <title>Isolation and sequence determination of cDNA encoding mouse rab 4 and candidate approach for the beige mutation in mice.</title>
        <authorList>
            <person name="Ikeda H."/>
            <person name="Ikegami T."/>
            <person name="Mitsui T."/>
            <person name="Senda D."/>
            <person name="Hayasaka K."/>
        </authorList>
    </citation>
    <scope>NUCLEOTIDE SEQUENCE [MRNA]</scope>
    <source>
        <tissue>Liver</tissue>
    </source>
</reference>
<reference key="2">
    <citation type="journal article" date="2006" name="Genes Cells">
        <title>Screening for target Rabs of TBC (Tre-2/Bub2/Cdc16) domain-containing proteins based on their Rab-binding activity.</title>
        <authorList>
            <person name="Itoh T."/>
            <person name="Satoh M."/>
            <person name="Kanno E."/>
            <person name="Fukuda M."/>
        </authorList>
    </citation>
    <scope>NUCLEOTIDE SEQUENCE [MRNA]</scope>
</reference>
<reference key="3">
    <citation type="journal article" date="2005" name="Science">
        <title>The transcriptional landscape of the mammalian genome.</title>
        <authorList>
            <person name="Carninci P."/>
            <person name="Kasukawa T."/>
            <person name="Katayama S."/>
            <person name="Gough J."/>
            <person name="Frith M.C."/>
            <person name="Maeda N."/>
            <person name="Oyama R."/>
            <person name="Ravasi T."/>
            <person name="Lenhard B."/>
            <person name="Wells C."/>
            <person name="Kodzius R."/>
            <person name="Shimokawa K."/>
            <person name="Bajic V.B."/>
            <person name="Brenner S.E."/>
            <person name="Batalov S."/>
            <person name="Forrest A.R."/>
            <person name="Zavolan M."/>
            <person name="Davis M.J."/>
            <person name="Wilming L.G."/>
            <person name="Aidinis V."/>
            <person name="Allen J.E."/>
            <person name="Ambesi-Impiombato A."/>
            <person name="Apweiler R."/>
            <person name="Aturaliya R.N."/>
            <person name="Bailey T.L."/>
            <person name="Bansal M."/>
            <person name="Baxter L."/>
            <person name="Beisel K.W."/>
            <person name="Bersano T."/>
            <person name="Bono H."/>
            <person name="Chalk A.M."/>
            <person name="Chiu K.P."/>
            <person name="Choudhary V."/>
            <person name="Christoffels A."/>
            <person name="Clutterbuck D.R."/>
            <person name="Crowe M.L."/>
            <person name="Dalla E."/>
            <person name="Dalrymple B.P."/>
            <person name="de Bono B."/>
            <person name="Della Gatta G."/>
            <person name="di Bernardo D."/>
            <person name="Down T."/>
            <person name="Engstrom P."/>
            <person name="Fagiolini M."/>
            <person name="Faulkner G."/>
            <person name="Fletcher C.F."/>
            <person name="Fukushima T."/>
            <person name="Furuno M."/>
            <person name="Futaki S."/>
            <person name="Gariboldi M."/>
            <person name="Georgii-Hemming P."/>
            <person name="Gingeras T.R."/>
            <person name="Gojobori T."/>
            <person name="Green R.E."/>
            <person name="Gustincich S."/>
            <person name="Harbers M."/>
            <person name="Hayashi Y."/>
            <person name="Hensch T.K."/>
            <person name="Hirokawa N."/>
            <person name="Hill D."/>
            <person name="Huminiecki L."/>
            <person name="Iacono M."/>
            <person name="Ikeo K."/>
            <person name="Iwama A."/>
            <person name="Ishikawa T."/>
            <person name="Jakt M."/>
            <person name="Kanapin A."/>
            <person name="Katoh M."/>
            <person name="Kawasawa Y."/>
            <person name="Kelso J."/>
            <person name="Kitamura H."/>
            <person name="Kitano H."/>
            <person name="Kollias G."/>
            <person name="Krishnan S.P."/>
            <person name="Kruger A."/>
            <person name="Kummerfeld S.K."/>
            <person name="Kurochkin I.V."/>
            <person name="Lareau L.F."/>
            <person name="Lazarevic D."/>
            <person name="Lipovich L."/>
            <person name="Liu J."/>
            <person name="Liuni S."/>
            <person name="McWilliam S."/>
            <person name="Madan Babu M."/>
            <person name="Madera M."/>
            <person name="Marchionni L."/>
            <person name="Matsuda H."/>
            <person name="Matsuzawa S."/>
            <person name="Miki H."/>
            <person name="Mignone F."/>
            <person name="Miyake S."/>
            <person name="Morris K."/>
            <person name="Mottagui-Tabar S."/>
            <person name="Mulder N."/>
            <person name="Nakano N."/>
            <person name="Nakauchi H."/>
            <person name="Ng P."/>
            <person name="Nilsson R."/>
            <person name="Nishiguchi S."/>
            <person name="Nishikawa S."/>
            <person name="Nori F."/>
            <person name="Ohara O."/>
            <person name="Okazaki Y."/>
            <person name="Orlando V."/>
            <person name="Pang K.C."/>
            <person name="Pavan W.J."/>
            <person name="Pavesi G."/>
            <person name="Pesole G."/>
            <person name="Petrovsky N."/>
            <person name="Piazza S."/>
            <person name="Reed J."/>
            <person name="Reid J.F."/>
            <person name="Ring B.Z."/>
            <person name="Ringwald M."/>
            <person name="Rost B."/>
            <person name="Ruan Y."/>
            <person name="Salzberg S.L."/>
            <person name="Sandelin A."/>
            <person name="Schneider C."/>
            <person name="Schoenbach C."/>
            <person name="Sekiguchi K."/>
            <person name="Semple C.A."/>
            <person name="Seno S."/>
            <person name="Sessa L."/>
            <person name="Sheng Y."/>
            <person name="Shibata Y."/>
            <person name="Shimada H."/>
            <person name="Shimada K."/>
            <person name="Silva D."/>
            <person name="Sinclair B."/>
            <person name="Sperling S."/>
            <person name="Stupka E."/>
            <person name="Sugiura K."/>
            <person name="Sultana R."/>
            <person name="Takenaka Y."/>
            <person name="Taki K."/>
            <person name="Tammoja K."/>
            <person name="Tan S.L."/>
            <person name="Tang S."/>
            <person name="Taylor M.S."/>
            <person name="Tegner J."/>
            <person name="Teichmann S.A."/>
            <person name="Ueda H.R."/>
            <person name="van Nimwegen E."/>
            <person name="Verardo R."/>
            <person name="Wei C.L."/>
            <person name="Yagi K."/>
            <person name="Yamanishi H."/>
            <person name="Zabarovsky E."/>
            <person name="Zhu S."/>
            <person name="Zimmer A."/>
            <person name="Hide W."/>
            <person name="Bult C."/>
            <person name="Grimmond S.M."/>
            <person name="Teasdale R.D."/>
            <person name="Liu E.T."/>
            <person name="Brusic V."/>
            <person name="Quackenbush J."/>
            <person name="Wahlestedt C."/>
            <person name="Mattick J.S."/>
            <person name="Hume D.A."/>
            <person name="Kai C."/>
            <person name="Sasaki D."/>
            <person name="Tomaru Y."/>
            <person name="Fukuda S."/>
            <person name="Kanamori-Katayama M."/>
            <person name="Suzuki M."/>
            <person name="Aoki J."/>
            <person name="Arakawa T."/>
            <person name="Iida J."/>
            <person name="Imamura K."/>
            <person name="Itoh M."/>
            <person name="Kato T."/>
            <person name="Kawaji H."/>
            <person name="Kawagashira N."/>
            <person name="Kawashima T."/>
            <person name="Kojima M."/>
            <person name="Kondo S."/>
            <person name="Konno H."/>
            <person name="Nakano K."/>
            <person name="Ninomiya N."/>
            <person name="Nishio T."/>
            <person name="Okada M."/>
            <person name="Plessy C."/>
            <person name="Shibata K."/>
            <person name="Shiraki T."/>
            <person name="Suzuki S."/>
            <person name="Tagami M."/>
            <person name="Waki K."/>
            <person name="Watahiki A."/>
            <person name="Okamura-Oho Y."/>
            <person name="Suzuki H."/>
            <person name="Kawai J."/>
            <person name="Hayashizaki Y."/>
        </authorList>
    </citation>
    <scope>NUCLEOTIDE SEQUENCE [LARGE SCALE MRNA]</scope>
    <source>
        <strain>C57BL/6J</strain>
        <tissue>Cecum</tissue>
        <tissue>Medulla oblongata</tissue>
    </source>
</reference>
<reference key="4">
    <citation type="journal article" date="2009" name="PLoS Biol.">
        <title>Lineage-specific biology revealed by a finished genome assembly of the mouse.</title>
        <authorList>
            <person name="Church D.M."/>
            <person name="Goodstadt L."/>
            <person name="Hillier L.W."/>
            <person name="Zody M.C."/>
            <person name="Goldstein S."/>
            <person name="She X."/>
            <person name="Bult C.J."/>
            <person name="Agarwala R."/>
            <person name="Cherry J.L."/>
            <person name="DiCuccio M."/>
            <person name="Hlavina W."/>
            <person name="Kapustin Y."/>
            <person name="Meric P."/>
            <person name="Maglott D."/>
            <person name="Birtle Z."/>
            <person name="Marques A.C."/>
            <person name="Graves T."/>
            <person name="Zhou S."/>
            <person name="Teague B."/>
            <person name="Potamousis K."/>
            <person name="Churas C."/>
            <person name="Place M."/>
            <person name="Herschleb J."/>
            <person name="Runnheim R."/>
            <person name="Forrest D."/>
            <person name="Amos-Landgraf J."/>
            <person name="Schwartz D.C."/>
            <person name="Cheng Z."/>
            <person name="Lindblad-Toh K."/>
            <person name="Eichler E.E."/>
            <person name="Ponting C.P."/>
        </authorList>
    </citation>
    <scope>NUCLEOTIDE SEQUENCE [LARGE SCALE GENOMIC DNA]</scope>
    <source>
        <strain>C57BL/6J</strain>
    </source>
</reference>
<reference key="5">
    <citation type="submission" date="2005-07" db="EMBL/GenBank/DDBJ databases">
        <authorList>
            <person name="Mural R.J."/>
            <person name="Adams M.D."/>
            <person name="Myers E.W."/>
            <person name="Smith H.O."/>
            <person name="Venter J.C."/>
        </authorList>
    </citation>
    <scope>NUCLEOTIDE SEQUENCE [LARGE SCALE GENOMIC DNA]</scope>
</reference>
<reference key="6">
    <citation type="journal article" date="2001" name="Proc. Natl. Acad. Sci. U.S.A.">
        <title>A FYVE-finger-containing protein, Rabip4, is a Rab4 effector involved in early endosomal traffic.</title>
        <authorList>
            <person name="Cormont M."/>
            <person name="Mari M."/>
            <person name="Galmiche A."/>
            <person name="Hofman P."/>
            <person name="Le Marchand-Brustel Y."/>
        </authorList>
    </citation>
    <scope>INTERACTION WITH RUFY1</scope>
</reference>
<reference key="7">
    <citation type="journal article" date="2003" name="Cell">
        <title>Serotonylation of small GTPases is a signal transduction pathway that triggers platelet alpha-granule release.</title>
        <authorList>
            <person name="Walther D.J."/>
            <person name="Peter J.U."/>
            <person name="Winter S."/>
            <person name="Hoeltje M."/>
            <person name="Paulmann N."/>
            <person name="Grohmann M."/>
            <person name="Vowinckel J."/>
            <person name="Alamo-Bethencourt V."/>
            <person name="Wilhelm C.S."/>
            <person name="Ahnert-Hilger G."/>
            <person name="Bader M."/>
        </authorList>
    </citation>
    <scope>FUNCTION</scope>
    <scope>SEROTONYLATION AT GLN-72</scope>
</reference>
<reference key="8">
    <citation type="journal article" date="2007" name="Genomics">
        <title>Identification of three novel proteins (SGSM1, 2, 3) which modulate small G protein (RAP and RAB)-mediated signaling pathway.</title>
        <authorList>
            <person name="Yang H."/>
            <person name="Sasaki T."/>
            <person name="Minoshima S."/>
            <person name="Shimizu N."/>
        </authorList>
    </citation>
    <scope>INTERACTION WITH SGSM1; SGSM2 AND SGSM3</scope>
</reference>
<reference key="9">
    <citation type="journal article" date="2010" name="Cell">
        <title>A tissue-specific atlas of mouse protein phosphorylation and expression.</title>
        <authorList>
            <person name="Huttlin E.L."/>
            <person name="Jedrychowski M.P."/>
            <person name="Elias J.E."/>
            <person name="Goswami T."/>
            <person name="Rad R."/>
            <person name="Beausoleil S.A."/>
            <person name="Villen J."/>
            <person name="Haas W."/>
            <person name="Sowa M.E."/>
            <person name="Gygi S.P."/>
        </authorList>
    </citation>
    <scope>IDENTIFICATION BY MASS SPECTROMETRY [LARGE SCALE ANALYSIS]</scope>
    <source>
        <tissue>Brain</tissue>
        <tissue>Brown adipose tissue</tissue>
        <tissue>Kidney</tissue>
        <tissue>Liver</tissue>
        <tissue>Testis</tissue>
    </source>
</reference>
<reference key="10">
    <citation type="journal article" date="2010" name="J. Biol. Chem.">
        <title>Assembly of the biogenesis of lysosome-related organelles complex-3 (BLOC-3) and its interaction with Rab9.</title>
        <authorList>
            <person name="Kloer D.P."/>
            <person name="Rojas R."/>
            <person name="Ivan V."/>
            <person name="Moriyama K."/>
            <person name="van Vlijmen T."/>
            <person name="Murthy N."/>
            <person name="Ghirlando R."/>
            <person name="van der Sluijs P."/>
            <person name="Hurley J.H."/>
            <person name="Bonifacino J.S."/>
        </authorList>
    </citation>
    <scope>LACK OF INTERACTION WITH HPS4</scope>
</reference>
<reference key="11">
    <citation type="journal article" date="2010" name="PLoS Biol.">
        <title>Neuron specific Rab4 effector GRASP-1 coordinates membrane specialization and maturation of recycling endosomes.</title>
        <authorList>
            <person name="Hoogenraad C.C."/>
            <person name="Popa I."/>
            <person name="Futai K."/>
            <person name="Martinez-Sanchez E."/>
            <person name="Sanchez-Martinez E."/>
            <person name="Wulf P.S."/>
            <person name="van Vlijmen T."/>
            <person name="Dortland B.R."/>
            <person name="Oorschot V."/>
            <person name="Govers R."/>
            <person name="Monti M."/>
            <person name="Heck A.J."/>
            <person name="Sheng M."/>
            <person name="Klumperman J."/>
            <person name="Rehmann H."/>
            <person name="Jaarsma D."/>
            <person name="Kapitein L.C."/>
            <person name="van der Sluijs P."/>
        </authorList>
    </citation>
    <scope>TISSUE SPECIFICITY</scope>
</reference>